<evidence type="ECO:0000256" key="1">
    <source>
        <dbReference type="SAM" id="MobiDB-lite"/>
    </source>
</evidence>
<evidence type="ECO:0000269" key="2">
    <source>
    </source>
</evidence>
<evidence type="ECO:0000269" key="3">
    <source>
    </source>
</evidence>
<evidence type="ECO:0000269" key="4">
    <source>
    </source>
</evidence>
<evidence type="ECO:0000269" key="5">
    <source>
    </source>
</evidence>
<evidence type="ECO:0000269" key="6">
    <source>
    </source>
</evidence>
<evidence type="ECO:0000269" key="7">
    <source>
    </source>
</evidence>
<evidence type="ECO:0000303" key="8">
    <source>
    </source>
</evidence>
<evidence type="ECO:0000303" key="9">
    <source>
    </source>
</evidence>
<evidence type="ECO:0000305" key="10"/>
<evidence type="ECO:0000312" key="11">
    <source>
        <dbReference type="MGI" id="MGI:2444480"/>
    </source>
</evidence>
<keyword id="KW-0025">Alternative splicing</keyword>
<keyword id="KW-0966">Cell projection</keyword>
<keyword id="KW-0963">Cytoplasm</keyword>
<keyword id="KW-1185">Reference proteome</keyword>
<keyword id="KW-0832">Ubl conjugation</keyword>
<comment type="function">
    <text evidence="6 7">Via its association with the multisubunit axonemal dynein complex, is potentially involved in the regulation of cilia function (PubMed:30060180). May also act as a cell cycle regulator (PubMed:17974961).</text>
</comment>
<comment type="subunit">
    <text evidence="6 7">Part of the multisubunit axonemal dynein complex formed at least of two heavy chains and a number of intermediate and light chains (PubMed:30060180). Interacts with tubulin (PubMed:17974961). Associates with microtubule (PubMed:17974961).</text>
</comment>
<comment type="subcellular location">
    <subcellularLocation>
        <location evidence="7">Cell projection</location>
        <location evidence="7">Cilium</location>
    </subcellularLocation>
    <subcellularLocation>
        <location evidence="2">Cytoplasm</location>
    </subcellularLocation>
    <text evidence="6">Colocalizes with microtubules in interphase.</text>
</comment>
<comment type="alternative products">
    <event type="alternative splicing"/>
    <isoform>
        <id>Q6TDU8-1</id>
        <name>1</name>
        <sequence type="displayed"/>
    </isoform>
    <isoform>
        <id>Q6TDU8-2</id>
        <name>2</name>
        <sequence type="described" ref="VSP_033384 VSP_033387"/>
    </isoform>
    <isoform>
        <id>Q6TDU8-3</id>
        <name>3</name>
        <sequence type="described" ref="VSP_033388 VSP_033385 VSP_033386"/>
    </isoform>
</comment>
<comment type="tissue specificity">
    <text evidence="2">High expressed in lung, kidney, and testis.</text>
</comment>
<comment type="developmental stage">
    <text evidence="6">Cell cycle-dependent expression. Not detected in G0 cells, starts to accumulate in early S phase, reaches the highest level in the G2 phase, and drops to very low levels at mitosis.</text>
</comment>
<comment type="PTM">
    <text evidence="6">Ubiquitinated. Ubiquitination leads to its degradation through the 26S proteasome. Ubiquitin-proteasome-mediated DNAI7 degradation occurs in mitosis.</text>
</comment>
<comment type="disruption phenotype">
    <text evidence="5">Deficient mice display a higher susceptibility to chemical induction of lung tumors.</text>
</comment>
<comment type="similarity">
    <text evidence="10">Belongs to the DNAI7 family.</text>
</comment>
<dbReference type="EMBL" id="AY423542">
    <property type="protein sequence ID" value="AAQ93498.1"/>
    <property type="molecule type" value="mRNA"/>
</dbReference>
<dbReference type="EMBL" id="AY485607">
    <property type="protein sequence ID" value="AAS55696.1"/>
    <property type="molecule type" value="mRNA"/>
</dbReference>
<dbReference type="EMBL" id="AY485608">
    <property type="protein sequence ID" value="AAS55697.1"/>
    <property type="molecule type" value="mRNA"/>
</dbReference>
<dbReference type="EMBL" id="AY490383">
    <property type="protein sequence ID" value="AAT72330.1"/>
    <property type="molecule type" value="Genomic_DNA"/>
</dbReference>
<dbReference type="EMBL" id="AY490384">
    <property type="protein sequence ID" value="AAT72331.1"/>
    <property type="molecule type" value="Genomic_DNA"/>
</dbReference>
<dbReference type="EMBL" id="AK034148">
    <property type="protein sequence ID" value="BAC28607.1"/>
    <property type="molecule type" value="mRNA"/>
</dbReference>
<dbReference type="EMBL" id="AK132912">
    <property type="protein sequence ID" value="BAE21417.1"/>
    <property type="molecule type" value="mRNA"/>
</dbReference>
<dbReference type="EMBL" id="BC120743">
    <property type="protein sequence ID" value="AAI20744.1"/>
    <property type="molecule type" value="mRNA"/>
</dbReference>
<dbReference type="EMBL" id="BC125423">
    <property type="protein sequence ID" value="AAI25424.1"/>
    <property type="molecule type" value="mRNA"/>
</dbReference>
<dbReference type="CCDS" id="CCDS39705.1">
    <molecule id="Q6TDU8-1"/>
</dbReference>
<dbReference type="RefSeq" id="NP_796196.3">
    <property type="nucleotide sequence ID" value="NM_177222.4"/>
</dbReference>
<dbReference type="SMR" id="Q6TDU8"/>
<dbReference type="BioGRID" id="236199">
    <property type="interactions" value="1"/>
</dbReference>
<dbReference type="FunCoup" id="Q6TDU8">
    <property type="interactions" value="237"/>
</dbReference>
<dbReference type="STRING" id="10090.ENSMUSP00000062279"/>
<dbReference type="PhosphoSitePlus" id="Q6TDU8"/>
<dbReference type="PaxDb" id="10090-ENSMUSP00000062279"/>
<dbReference type="ProteomicsDB" id="265666">
    <molecule id="Q6TDU8-1"/>
</dbReference>
<dbReference type="ProteomicsDB" id="265667">
    <molecule id="Q6TDU8-2"/>
</dbReference>
<dbReference type="ProteomicsDB" id="265668">
    <molecule id="Q6TDU8-3"/>
</dbReference>
<dbReference type="GeneID" id="320662"/>
<dbReference type="KEGG" id="mmu:320662"/>
<dbReference type="UCSC" id="uc009erb.1">
    <molecule id="Q6TDU8-1"/>
    <property type="organism name" value="mouse"/>
</dbReference>
<dbReference type="UCSC" id="uc009ere.2">
    <molecule id="Q6TDU8-3"/>
    <property type="organism name" value="mouse"/>
</dbReference>
<dbReference type="UCSC" id="uc012evn.1">
    <molecule id="Q6TDU8-2"/>
    <property type="organism name" value="mouse"/>
</dbReference>
<dbReference type="AGR" id="MGI:2444480"/>
<dbReference type="CTD" id="55259"/>
<dbReference type="MGI" id="MGI:2444480">
    <property type="gene designation" value="Dnai7"/>
</dbReference>
<dbReference type="eggNOG" id="ENOG502QQM9">
    <property type="taxonomic scope" value="Eukaryota"/>
</dbReference>
<dbReference type="InParanoid" id="Q6TDU8"/>
<dbReference type="OrthoDB" id="297923at2759"/>
<dbReference type="PhylomeDB" id="Q6TDU8"/>
<dbReference type="TreeFam" id="TF326474"/>
<dbReference type="BioGRID-ORCS" id="320662">
    <property type="hits" value="0 hits in 76 CRISPR screens"/>
</dbReference>
<dbReference type="ChiTaRS" id="Casc1">
    <property type="organism name" value="mouse"/>
</dbReference>
<dbReference type="PRO" id="PR:Q6TDU8"/>
<dbReference type="Proteomes" id="UP000000589">
    <property type="component" value="Unplaced"/>
</dbReference>
<dbReference type="RNAct" id="Q6TDU8">
    <property type="molecule type" value="protein"/>
</dbReference>
<dbReference type="GO" id="GO:0005858">
    <property type="term" value="C:axonemal dynein complex"/>
    <property type="evidence" value="ECO:0000314"/>
    <property type="project" value="UniProtKB"/>
</dbReference>
<dbReference type="GO" id="GO:0005929">
    <property type="term" value="C:cilium"/>
    <property type="evidence" value="ECO:0000314"/>
    <property type="project" value="UniProtKB"/>
</dbReference>
<dbReference type="GO" id="GO:0005737">
    <property type="term" value="C:cytoplasm"/>
    <property type="evidence" value="ECO:0000314"/>
    <property type="project" value="UniProtKB"/>
</dbReference>
<dbReference type="GO" id="GO:0005881">
    <property type="term" value="C:cytoplasmic microtubule"/>
    <property type="evidence" value="ECO:0000314"/>
    <property type="project" value="MGI"/>
</dbReference>
<dbReference type="GO" id="GO:0036156">
    <property type="term" value="C:inner dynein arm"/>
    <property type="evidence" value="ECO:0000266"/>
    <property type="project" value="MGI"/>
</dbReference>
<dbReference type="GO" id="GO:0015630">
    <property type="term" value="C:microtubule cytoskeleton"/>
    <property type="evidence" value="ECO:0000314"/>
    <property type="project" value="MGI"/>
</dbReference>
<dbReference type="GO" id="GO:0043014">
    <property type="term" value="F:alpha-tubulin binding"/>
    <property type="evidence" value="ECO:0000266"/>
    <property type="project" value="MGI"/>
</dbReference>
<dbReference type="GO" id="GO:0048487">
    <property type="term" value="F:beta-tubulin binding"/>
    <property type="evidence" value="ECO:0000314"/>
    <property type="project" value="MGI"/>
</dbReference>
<dbReference type="GO" id="GO:0008017">
    <property type="term" value="F:microtubule binding"/>
    <property type="evidence" value="ECO:0000314"/>
    <property type="project" value="MGI"/>
</dbReference>
<dbReference type="GO" id="GO:0051012">
    <property type="term" value="P:microtubule sliding"/>
    <property type="evidence" value="ECO:0000266"/>
    <property type="project" value="MGI"/>
</dbReference>
<dbReference type="InterPro" id="IPR031826">
    <property type="entry name" value="IC97/Casc1_N"/>
</dbReference>
<dbReference type="InterPro" id="IPR023247">
    <property type="entry name" value="IC97/Dnai7-like"/>
</dbReference>
<dbReference type="PANTHER" id="PTHR20929:SF11">
    <property type="entry name" value="DYNEIN AXONEMAL INTERMEDIATE CHAIN 7"/>
    <property type="match status" value="1"/>
</dbReference>
<dbReference type="PANTHER" id="PTHR20929">
    <property type="entry name" value="LUNG ADENOMA SUSCEPTIBILITY 1-RELATED"/>
    <property type="match status" value="1"/>
</dbReference>
<dbReference type="Pfam" id="PF15927">
    <property type="entry name" value="Casc1_N"/>
    <property type="match status" value="1"/>
</dbReference>
<dbReference type="PRINTS" id="PR02043">
    <property type="entry name" value="CANCERSCCP1"/>
</dbReference>
<protein>
    <recommendedName>
        <fullName evidence="10">Dynein axonemal intermediate chain 7</fullName>
    </recommendedName>
    <alternativeName>
        <fullName>Cancer susceptibility candidate gene 1 protein homolog</fullName>
        <shortName>Protein CASC1</shortName>
    </alternativeName>
    <alternativeName>
        <fullName>Cilia and flagella associated protein 94</fullName>
    </alternativeName>
    <alternativeName>
        <fullName evidence="8">Lung adenoma susceptibility protein 1</fullName>
    </alternativeName>
</protein>
<accession>Q6TDU8</accession>
<accession>Q3V0T6</accession>
<accession>Q64JA2</accession>
<accession>Q675B4</accession>
<accession>Q675B5</accession>
<accession>Q8BZM3</accession>
<sequence length="730" mass="84966">MAPKSKKAPSKKKMTKAERLRLMQEEEERRLKEEEEARLKFEKEEQERLEIQRIEREKWNLLEKKDLERRSQELEELALLEGCFPEAEKQKREIRALAQWKHYTECDGSPDPWVAQEMNTFISLWEEEKNQAFEQVMEKSKLVLSLIEKVKLILLETPTYELDHRTVLQHQGSILRLQELLSLKINVATELLLRQASNLADLDTGNMEKIIKDENVTLYVWANLKKNPRHRSVRFSETQIGFEIPRILATSNVALRLLHTRYDHITPLFPIAVTEQNQNPVGAEQVNVEESTEKAMTEEKLFTEEKAANEDEQPKAEQERELNLVQEENKYEAIENTVLQRTSDSEGEDSQTTQLELEMKLLSEAVLAAQLCLVENVVELPEASQAYKVDLCHFSTLGGVYHLDVLELPPQCKPVKGWVLVEILQEGLQRFIYPPDTTEEPDPDVTFPPIEVTLEIHKSVIFFERPRVVRWDNEGKFWRSDGISSVYYNREDRLLTFSMDTLGPVTLIQDAHVNMPYQSWEMSPCGMNKVLLIVKTVFMELQIYIKENLCMLASVKLRGKGLEFHLKGKWMAPIPFILALKEAGLNIFPAVYSHFYVVINNKVPQVELKAYRQMALLSSAFSFGWSKWNMVCNSTRVVIRVREQLSEETEHHTWSLLMFSGDRAQMLKMQEENDKFSEALREGTEFHSTLYHMMKDFASPVAMERVRHSNCQFIDSVCYMLLSIRVLSYS</sequence>
<name>DNAI7_MOUSE</name>
<organism>
    <name type="scientific">Mus musculus</name>
    <name type="common">Mouse</name>
    <dbReference type="NCBI Taxonomy" id="10090"/>
    <lineage>
        <taxon>Eukaryota</taxon>
        <taxon>Metazoa</taxon>
        <taxon>Chordata</taxon>
        <taxon>Craniata</taxon>
        <taxon>Vertebrata</taxon>
        <taxon>Euteleostomi</taxon>
        <taxon>Mammalia</taxon>
        <taxon>Eutheria</taxon>
        <taxon>Euarchontoglires</taxon>
        <taxon>Glires</taxon>
        <taxon>Rodentia</taxon>
        <taxon>Myomorpha</taxon>
        <taxon>Muroidea</taxon>
        <taxon>Muridae</taxon>
        <taxon>Murinae</taxon>
        <taxon>Mus</taxon>
        <taxon>Mus</taxon>
    </lineage>
</organism>
<reference key="1">
    <citation type="journal article" date="2003" name="Proc. Natl. Acad. Sci. U.S.A.">
        <title>Positional cloning of the major quantitative trait locus underlying lung tumor susceptibility in mice.</title>
        <authorList>
            <person name="Zhang Z."/>
            <person name="Futamura M."/>
            <person name="Vikis H.G."/>
            <person name="Wang M."/>
            <person name="Li J."/>
            <person name="Wang Y."/>
            <person name="Guan K.-L."/>
            <person name="You M."/>
        </authorList>
    </citation>
    <scope>NUCLEOTIDE SEQUENCE [MRNA] (ISOFORM 1)</scope>
    <scope>TISSUE SPECIFICITY</scope>
    <scope>SUBCELLULAR LOCATION</scope>
    <source>
        <strain>A/J</strain>
        <tissue>Lung</tissue>
    </source>
</reference>
<reference key="2">
    <citation type="journal article" date="2004" name="Oncogene">
        <title>Haplotype sharing suggests that a genomic segment containing six genes accounts for the pulmonary adenoma susceptibility 1 (Pas1) locus activity in mice.</title>
        <authorList>
            <person name="Manenti G."/>
            <person name="Galbiati F."/>
            <person name="Gianni-Barrera R."/>
            <person name="Pettinicchio A."/>
            <person name="Acevedo A."/>
            <person name="Dragani T.A."/>
        </authorList>
    </citation>
    <scope>NUCLEOTIDE SEQUENCE [MRNA] (ISOFORM 1)</scope>
    <scope>VARIANT SER-60</scope>
    <source>
        <strain>A/J</strain>
        <strain>C57BL/6J</strain>
        <tissue>Lung</tissue>
    </source>
</reference>
<reference key="3">
    <citation type="journal article" date="2005" name="Science">
        <title>The transcriptional landscape of the mammalian genome.</title>
        <authorList>
            <person name="Carninci P."/>
            <person name="Kasukawa T."/>
            <person name="Katayama S."/>
            <person name="Gough J."/>
            <person name="Frith M.C."/>
            <person name="Maeda N."/>
            <person name="Oyama R."/>
            <person name="Ravasi T."/>
            <person name="Lenhard B."/>
            <person name="Wells C."/>
            <person name="Kodzius R."/>
            <person name="Shimokawa K."/>
            <person name="Bajic V.B."/>
            <person name="Brenner S.E."/>
            <person name="Batalov S."/>
            <person name="Forrest A.R."/>
            <person name="Zavolan M."/>
            <person name="Davis M.J."/>
            <person name="Wilming L.G."/>
            <person name="Aidinis V."/>
            <person name="Allen J.E."/>
            <person name="Ambesi-Impiombato A."/>
            <person name="Apweiler R."/>
            <person name="Aturaliya R.N."/>
            <person name="Bailey T.L."/>
            <person name="Bansal M."/>
            <person name="Baxter L."/>
            <person name="Beisel K.W."/>
            <person name="Bersano T."/>
            <person name="Bono H."/>
            <person name="Chalk A.M."/>
            <person name="Chiu K.P."/>
            <person name="Choudhary V."/>
            <person name="Christoffels A."/>
            <person name="Clutterbuck D.R."/>
            <person name="Crowe M.L."/>
            <person name="Dalla E."/>
            <person name="Dalrymple B.P."/>
            <person name="de Bono B."/>
            <person name="Della Gatta G."/>
            <person name="di Bernardo D."/>
            <person name="Down T."/>
            <person name="Engstrom P."/>
            <person name="Fagiolini M."/>
            <person name="Faulkner G."/>
            <person name="Fletcher C.F."/>
            <person name="Fukushima T."/>
            <person name="Furuno M."/>
            <person name="Futaki S."/>
            <person name="Gariboldi M."/>
            <person name="Georgii-Hemming P."/>
            <person name="Gingeras T.R."/>
            <person name="Gojobori T."/>
            <person name="Green R.E."/>
            <person name="Gustincich S."/>
            <person name="Harbers M."/>
            <person name="Hayashi Y."/>
            <person name="Hensch T.K."/>
            <person name="Hirokawa N."/>
            <person name="Hill D."/>
            <person name="Huminiecki L."/>
            <person name="Iacono M."/>
            <person name="Ikeo K."/>
            <person name="Iwama A."/>
            <person name="Ishikawa T."/>
            <person name="Jakt M."/>
            <person name="Kanapin A."/>
            <person name="Katoh M."/>
            <person name="Kawasawa Y."/>
            <person name="Kelso J."/>
            <person name="Kitamura H."/>
            <person name="Kitano H."/>
            <person name="Kollias G."/>
            <person name="Krishnan S.P."/>
            <person name="Kruger A."/>
            <person name="Kummerfeld S.K."/>
            <person name="Kurochkin I.V."/>
            <person name="Lareau L.F."/>
            <person name="Lazarevic D."/>
            <person name="Lipovich L."/>
            <person name="Liu J."/>
            <person name="Liuni S."/>
            <person name="McWilliam S."/>
            <person name="Madan Babu M."/>
            <person name="Madera M."/>
            <person name="Marchionni L."/>
            <person name="Matsuda H."/>
            <person name="Matsuzawa S."/>
            <person name="Miki H."/>
            <person name="Mignone F."/>
            <person name="Miyake S."/>
            <person name="Morris K."/>
            <person name="Mottagui-Tabar S."/>
            <person name="Mulder N."/>
            <person name="Nakano N."/>
            <person name="Nakauchi H."/>
            <person name="Ng P."/>
            <person name="Nilsson R."/>
            <person name="Nishiguchi S."/>
            <person name="Nishikawa S."/>
            <person name="Nori F."/>
            <person name="Ohara O."/>
            <person name="Okazaki Y."/>
            <person name="Orlando V."/>
            <person name="Pang K.C."/>
            <person name="Pavan W.J."/>
            <person name="Pavesi G."/>
            <person name="Pesole G."/>
            <person name="Petrovsky N."/>
            <person name="Piazza S."/>
            <person name="Reed J."/>
            <person name="Reid J.F."/>
            <person name="Ring B.Z."/>
            <person name="Ringwald M."/>
            <person name="Rost B."/>
            <person name="Ruan Y."/>
            <person name="Salzberg S.L."/>
            <person name="Sandelin A."/>
            <person name="Schneider C."/>
            <person name="Schoenbach C."/>
            <person name="Sekiguchi K."/>
            <person name="Semple C.A."/>
            <person name="Seno S."/>
            <person name="Sessa L."/>
            <person name="Sheng Y."/>
            <person name="Shibata Y."/>
            <person name="Shimada H."/>
            <person name="Shimada K."/>
            <person name="Silva D."/>
            <person name="Sinclair B."/>
            <person name="Sperling S."/>
            <person name="Stupka E."/>
            <person name="Sugiura K."/>
            <person name="Sultana R."/>
            <person name="Takenaka Y."/>
            <person name="Taki K."/>
            <person name="Tammoja K."/>
            <person name="Tan S.L."/>
            <person name="Tang S."/>
            <person name="Taylor M.S."/>
            <person name="Tegner J."/>
            <person name="Teichmann S.A."/>
            <person name="Ueda H.R."/>
            <person name="van Nimwegen E."/>
            <person name="Verardo R."/>
            <person name="Wei C.L."/>
            <person name="Yagi K."/>
            <person name="Yamanishi H."/>
            <person name="Zabarovsky E."/>
            <person name="Zhu S."/>
            <person name="Zimmer A."/>
            <person name="Hide W."/>
            <person name="Bult C."/>
            <person name="Grimmond S.M."/>
            <person name="Teasdale R.D."/>
            <person name="Liu E.T."/>
            <person name="Brusic V."/>
            <person name="Quackenbush J."/>
            <person name="Wahlestedt C."/>
            <person name="Mattick J.S."/>
            <person name="Hume D.A."/>
            <person name="Kai C."/>
            <person name="Sasaki D."/>
            <person name="Tomaru Y."/>
            <person name="Fukuda S."/>
            <person name="Kanamori-Katayama M."/>
            <person name="Suzuki M."/>
            <person name="Aoki J."/>
            <person name="Arakawa T."/>
            <person name="Iida J."/>
            <person name="Imamura K."/>
            <person name="Itoh M."/>
            <person name="Kato T."/>
            <person name="Kawaji H."/>
            <person name="Kawagashira N."/>
            <person name="Kawashima T."/>
            <person name="Kojima M."/>
            <person name="Kondo S."/>
            <person name="Konno H."/>
            <person name="Nakano K."/>
            <person name="Ninomiya N."/>
            <person name="Nishio T."/>
            <person name="Okada M."/>
            <person name="Plessy C."/>
            <person name="Shibata K."/>
            <person name="Shiraki T."/>
            <person name="Suzuki S."/>
            <person name="Tagami M."/>
            <person name="Waki K."/>
            <person name="Watahiki A."/>
            <person name="Okamura-Oho Y."/>
            <person name="Suzuki H."/>
            <person name="Kawai J."/>
            <person name="Hayashizaki Y."/>
        </authorList>
    </citation>
    <scope>NUCLEOTIDE SEQUENCE [LARGE SCALE MRNA] (ISOFORMS 2 AND 3)</scope>
    <scope>VARIANT SER-60</scope>
    <source>
        <strain>C57BL/6J</strain>
        <tissue>Diencephalon</tissue>
        <tissue>Testis</tissue>
    </source>
</reference>
<reference key="4">
    <citation type="journal article" date="2004" name="Genome Res.">
        <title>The status, quality, and expansion of the NIH full-length cDNA project: the Mammalian Gene Collection (MGC).</title>
        <authorList>
            <consortium name="The MGC Project Team"/>
        </authorList>
    </citation>
    <scope>NUCLEOTIDE SEQUENCE [LARGE SCALE MRNA] (ISOFORM 1)</scope>
    <source>
        <tissue>Brain</tissue>
    </source>
</reference>
<reference key="5">
    <citation type="journal article" date="2006" name="Nat. Genet.">
        <title>Candidate lung tumor susceptibility genes identified through whole-genome association analyses in inbred mice.</title>
        <authorList>
            <person name="Liu P."/>
            <person name="Wang Y."/>
            <person name="Vikis H."/>
            <person name="Maciag A."/>
            <person name="Wang D."/>
            <person name="Lu Y."/>
            <person name="Liu Y."/>
            <person name="You M."/>
        </authorList>
    </citation>
    <scope>DISRUPTION PHENOTYPE</scope>
</reference>
<reference key="6">
    <citation type="journal article" date="2007" name="Cancer Res.">
        <title>Degradation of lung adenoma susceptibility 1, a major candidate mouse lung tumor modifier, is required for cell cycle progression.</title>
        <authorList>
            <person name="Liu Y."/>
            <person name="Vikis H.G."/>
            <person name="Yi Y."/>
            <person name="Futamura M."/>
            <person name="Wang Y."/>
            <person name="You M."/>
        </authorList>
    </citation>
    <scope>INTERACTION WITH TUBULIN</scope>
    <scope>INTERACTION WITH MICROTUBULE</scope>
    <scope>DEVELOPMENTAL STAGE</scope>
    <scope>SUBCELLULAR LOCATION</scope>
    <scope>UBIQUITINATION</scope>
    <scope>FUNCTION</scope>
    <scope>CHARACTERIZATION OF VARIANT SER-60</scope>
</reference>
<reference key="7">
    <citation type="journal article" date="2010" name="Cell">
        <title>A tissue-specific atlas of mouse protein phosphorylation and expression.</title>
        <authorList>
            <person name="Huttlin E.L."/>
            <person name="Jedrychowski M.P."/>
            <person name="Elias J.E."/>
            <person name="Goswami T."/>
            <person name="Rad R."/>
            <person name="Beausoleil S.A."/>
            <person name="Villen J."/>
            <person name="Haas W."/>
            <person name="Sowa M.E."/>
            <person name="Gygi S.P."/>
        </authorList>
    </citation>
    <scope>IDENTIFICATION BY MASS SPECTROMETRY [LARGE SCALE ANALYSIS]</scope>
    <source>
        <tissue>Testis</tissue>
    </source>
</reference>
<reference key="8">
    <citation type="journal article" date="2019" name="J. Mol. Cell Biol.">
        <title>Vertebrate Dynein-f depends on Wdr78 for axonemal localization and is essential for ciliary beat.</title>
        <authorList>
            <person name="Zhang Y."/>
            <person name="Chen Y."/>
            <person name="Zheng J."/>
            <person name="Wang J."/>
            <person name="Duan S."/>
            <person name="Zhang W."/>
            <person name="Yan X."/>
            <person name="Zhu X."/>
        </authorList>
    </citation>
    <scope>SUBUNIT</scope>
    <scope>SUBCELLULAR LOCATION</scope>
    <scope>FUNCTION</scope>
</reference>
<proteinExistence type="evidence at protein level"/>
<feature type="chain" id="PRO_0000332733" description="Dynein axonemal intermediate chain 7">
    <location>
        <begin position="1"/>
        <end position="730"/>
    </location>
</feature>
<feature type="region of interest" description="Disordered" evidence="1">
    <location>
        <begin position="1"/>
        <end position="20"/>
    </location>
</feature>
<feature type="compositionally biased region" description="Basic residues" evidence="1">
    <location>
        <begin position="1"/>
        <end position="14"/>
    </location>
</feature>
<feature type="splice variant" id="VSP_033388" description="In isoform 3." evidence="9">
    <location>
        <begin position="1"/>
        <end position="206"/>
    </location>
</feature>
<feature type="splice variant" id="VSP_033384" description="In isoform 2." evidence="9">
    <location>
        <begin position="1"/>
        <end position="13"/>
    </location>
</feature>
<feature type="splice variant" id="VSP_033385" description="In isoform 3." evidence="9">
    <original>TSDSEGEDSQTTQLELEM</original>
    <variation>VGYSVSLSVCLSSVYIPG</variation>
    <location>
        <begin position="342"/>
        <end position="359"/>
    </location>
</feature>
<feature type="splice variant" id="VSP_033386" description="In isoform 3." evidence="9">
    <location>
        <begin position="360"/>
        <end position="730"/>
    </location>
</feature>
<feature type="splice variant" id="VSP_033387" description="In isoform 2." evidence="9">
    <location>
        <begin position="604"/>
        <end position="641"/>
    </location>
</feature>
<feature type="sequence variant" description="In strain: C57BL/6J; could be associated with tumor susceptibility; does not affect binding with tubulin; more unstable." evidence="3 4 6">
    <original>N</original>
    <variation>S</variation>
    <location>
        <position position="60"/>
    </location>
</feature>
<gene>
    <name type="primary">Dnai7</name>
    <name type="synonym">Casc1</name>
    <name evidence="11" type="synonym">Cfap94</name>
    <name evidence="8" type="synonym">Las1</name>
</gene>